<proteinExistence type="inferred from homology"/>
<keyword id="KW-0963">Cytoplasm</keyword>
<keyword id="KW-0342">GTP-binding</keyword>
<keyword id="KW-0378">Hydrolase</keyword>
<keyword id="KW-0460">Magnesium</keyword>
<keyword id="KW-0479">Metal-binding</keyword>
<keyword id="KW-0547">Nucleotide-binding</keyword>
<keyword id="KW-1185">Reference proteome</keyword>
<accession>A6Q4D2</accession>
<feature type="chain" id="PRO_0000386088" description="GTPase Obg">
    <location>
        <begin position="1"/>
        <end position="367"/>
    </location>
</feature>
<feature type="domain" description="Obg" evidence="2">
    <location>
        <begin position="1"/>
        <end position="158"/>
    </location>
</feature>
<feature type="domain" description="OBG-type G" evidence="1">
    <location>
        <begin position="159"/>
        <end position="358"/>
    </location>
</feature>
<feature type="binding site" evidence="1">
    <location>
        <begin position="165"/>
        <end position="172"/>
    </location>
    <ligand>
        <name>GTP</name>
        <dbReference type="ChEBI" id="CHEBI:37565"/>
    </ligand>
</feature>
<feature type="binding site" evidence="1">
    <location>
        <position position="172"/>
    </location>
    <ligand>
        <name>Mg(2+)</name>
        <dbReference type="ChEBI" id="CHEBI:18420"/>
    </ligand>
</feature>
<feature type="binding site" evidence="1">
    <location>
        <begin position="190"/>
        <end position="194"/>
    </location>
    <ligand>
        <name>GTP</name>
        <dbReference type="ChEBI" id="CHEBI:37565"/>
    </ligand>
</feature>
<feature type="binding site" evidence="1">
    <location>
        <position position="192"/>
    </location>
    <ligand>
        <name>Mg(2+)</name>
        <dbReference type="ChEBI" id="CHEBI:18420"/>
    </ligand>
</feature>
<feature type="binding site" evidence="1">
    <location>
        <begin position="212"/>
        <end position="215"/>
    </location>
    <ligand>
        <name>GTP</name>
        <dbReference type="ChEBI" id="CHEBI:37565"/>
    </ligand>
</feature>
<feature type="binding site" evidence="1">
    <location>
        <begin position="280"/>
        <end position="283"/>
    </location>
    <ligand>
        <name>GTP</name>
        <dbReference type="ChEBI" id="CHEBI:37565"/>
    </ligand>
</feature>
<feature type="binding site" evidence="1">
    <location>
        <begin position="339"/>
        <end position="341"/>
    </location>
    <ligand>
        <name>GTP</name>
        <dbReference type="ChEBI" id="CHEBI:37565"/>
    </ligand>
</feature>
<protein>
    <recommendedName>
        <fullName evidence="1">GTPase Obg</fullName>
        <ecNumber evidence="1">3.6.5.-</ecNumber>
    </recommendedName>
    <alternativeName>
        <fullName evidence="1">GTP-binding protein Obg</fullName>
    </alternativeName>
</protein>
<name>OBG_NITSB</name>
<comment type="function">
    <text evidence="1">An essential GTPase which binds GTP, GDP and possibly (p)ppGpp with moderate affinity, with high nucleotide exchange rates and a fairly low GTP hydrolysis rate. Plays a role in control of the cell cycle, stress response, ribosome biogenesis and in those bacteria that undergo differentiation, in morphogenesis control.</text>
</comment>
<comment type="cofactor">
    <cofactor evidence="1">
        <name>Mg(2+)</name>
        <dbReference type="ChEBI" id="CHEBI:18420"/>
    </cofactor>
</comment>
<comment type="subunit">
    <text evidence="1">Monomer.</text>
</comment>
<comment type="subcellular location">
    <subcellularLocation>
        <location evidence="1">Cytoplasm</location>
    </subcellularLocation>
</comment>
<comment type="similarity">
    <text evidence="1">Belongs to the TRAFAC class OBG-HflX-like GTPase superfamily. OBG GTPase family.</text>
</comment>
<dbReference type="EC" id="3.6.5.-" evidence="1"/>
<dbReference type="EMBL" id="AP009178">
    <property type="protein sequence ID" value="BAF70341.1"/>
    <property type="molecule type" value="Genomic_DNA"/>
</dbReference>
<dbReference type="RefSeq" id="WP_012082604.1">
    <property type="nucleotide sequence ID" value="NC_009662.1"/>
</dbReference>
<dbReference type="SMR" id="A6Q4D2"/>
<dbReference type="FunCoup" id="A6Q4D2">
    <property type="interactions" value="441"/>
</dbReference>
<dbReference type="STRING" id="387092.NIS_1232"/>
<dbReference type="KEGG" id="nis:NIS_1232"/>
<dbReference type="eggNOG" id="COG0536">
    <property type="taxonomic scope" value="Bacteria"/>
</dbReference>
<dbReference type="HOGENOM" id="CLU_011747_2_0_7"/>
<dbReference type="InParanoid" id="A6Q4D2"/>
<dbReference type="OrthoDB" id="9807318at2"/>
<dbReference type="Proteomes" id="UP000001118">
    <property type="component" value="Chromosome"/>
</dbReference>
<dbReference type="GO" id="GO:0005737">
    <property type="term" value="C:cytoplasm"/>
    <property type="evidence" value="ECO:0007669"/>
    <property type="project" value="UniProtKB-SubCell"/>
</dbReference>
<dbReference type="GO" id="GO:0005525">
    <property type="term" value="F:GTP binding"/>
    <property type="evidence" value="ECO:0007669"/>
    <property type="project" value="UniProtKB-UniRule"/>
</dbReference>
<dbReference type="GO" id="GO:0003924">
    <property type="term" value="F:GTPase activity"/>
    <property type="evidence" value="ECO:0007669"/>
    <property type="project" value="UniProtKB-UniRule"/>
</dbReference>
<dbReference type="GO" id="GO:0000287">
    <property type="term" value="F:magnesium ion binding"/>
    <property type="evidence" value="ECO:0007669"/>
    <property type="project" value="InterPro"/>
</dbReference>
<dbReference type="GO" id="GO:0042254">
    <property type="term" value="P:ribosome biogenesis"/>
    <property type="evidence" value="ECO:0007669"/>
    <property type="project" value="UniProtKB-UniRule"/>
</dbReference>
<dbReference type="CDD" id="cd01898">
    <property type="entry name" value="Obg"/>
    <property type="match status" value="1"/>
</dbReference>
<dbReference type="FunFam" id="2.70.210.12:FF:000001">
    <property type="entry name" value="GTPase Obg"/>
    <property type="match status" value="1"/>
</dbReference>
<dbReference type="Gene3D" id="2.70.210.12">
    <property type="entry name" value="GTP1/OBG domain"/>
    <property type="match status" value="1"/>
</dbReference>
<dbReference type="Gene3D" id="3.40.50.300">
    <property type="entry name" value="P-loop containing nucleotide triphosphate hydrolases"/>
    <property type="match status" value="1"/>
</dbReference>
<dbReference type="HAMAP" id="MF_01454">
    <property type="entry name" value="GTPase_Obg"/>
    <property type="match status" value="1"/>
</dbReference>
<dbReference type="InterPro" id="IPR031167">
    <property type="entry name" value="G_OBG"/>
</dbReference>
<dbReference type="InterPro" id="IPR006073">
    <property type="entry name" value="GTP-bd"/>
</dbReference>
<dbReference type="InterPro" id="IPR014100">
    <property type="entry name" value="GTP-bd_Obg/CgtA"/>
</dbReference>
<dbReference type="InterPro" id="IPR006169">
    <property type="entry name" value="GTP1_OBG_dom"/>
</dbReference>
<dbReference type="InterPro" id="IPR036726">
    <property type="entry name" value="GTP1_OBG_dom_sf"/>
</dbReference>
<dbReference type="InterPro" id="IPR045086">
    <property type="entry name" value="OBG_GTPase"/>
</dbReference>
<dbReference type="InterPro" id="IPR027417">
    <property type="entry name" value="P-loop_NTPase"/>
</dbReference>
<dbReference type="NCBIfam" id="TIGR02729">
    <property type="entry name" value="Obg_CgtA"/>
    <property type="match status" value="1"/>
</dbReference>
<dbReference type="NCBIfam" id="NF008955">
    <property type="entry name" value="PRK12297.1"/>
    <property type="match status" value="1"/>
</dbReference>
<dbReference type="NCBIfam" id="NF008956">
    <property type="entry name" value="PRK12299.1"/>
    <property type="match status" value="1"/>
</dbReference>
<dbReference type="PANTHER" id="PTHR11702">
    <property type="entry name" value="DEVELOPMENTALLY REGULATED GTP-BINDING PROTEIN-RELATED"/>
    <property type="match status" value="1"/>
</dbReference>
<dbReference type="PANTHER" id="PTHR11702:SF31">
    <property type="entry name" value="MITOCHONDRIAL RIBOSOME-ASSOCIATED GTPASE 2"/>
    <property type="match status" value="1"/>
</dbReference>
<dbReference type="Pfam" id="PF01018">
    <property type="entry name" value="GTP1_OBG"/>
    <property type="match status" value="1"/>
</dbReference>
<dbReference type="Pfam" id="PF01926">
    <property type="entry name" value="MMR_HSR1"/>
    <property type="match status" value="1"/>
</dbReference>
<dbReference type="PIRSF" id="PIRSF002401">
    <property type="entry name" value="GTP_bd_Obg/CgtA"/>
    <property type="match status" value="1"/>
</dbReference>
<dbReference type="PRINTS" id="PR00326">
    <property type="entry name" value="GTP1OBG"/>
</dbReference>
<dbReference type="SUPFAM" id="SSF82051">
    <property type="entry name" value="Obg GTP-binding protein N-terminal domain"/>
    <property type="match status" value="1"/>
</dbReference>
<dbReference type="SUPFAM" id="SSF52540">
    <property type="entry name" value="P-loop containing nucleoside triphosphate hydrolases"/>
    <property type="match status" value="1"/>
</dbReference>
<dbReference type="PROSITE" id="PS51710">
    <property type="entry name" value="G_OBG"/>
    <property type="match status" value="1"/>
</dbReference>
<dbReference type="PROSITE" id="PS51883">
    <property type="entry name" value="OBG"/>
    <property type="match status" value="1"/>
</dbReference>
<gene>
    <name evidence="1" type="primary">obg</name>
    <name type="ordered locus">NIS_1232</name>
</gene>
<reference key="1">
    <citation type="journal article" date="2007" name="Proc. Natl. Acad. Sci. U.S.A.">
        <title>Deep-sea vent epsilon-proteobacterial genomes provide insights into emergence of pathogens.</title>
        <authorList>
            <person name="Nakagawa S."/>
            <person name="Takaki Y."/>
            <person name="Shimamura S."/>
            <person name="Reysenbach A.-L."/>
            <person name="Takai K."/>
            <person name="Horikoshi K."/>
        </authorList>
    </citation>
    <scope>NUCLEOTIDE SEQUENCE [LARGE SCALE GENOMIC DNA]</scope>
    <source>
        <strain>SB155-2</strain>
    </source>
</reference>
<sequence length="367" mass="40541">MFIDNVELTVHSGKGGQGAVSFRREKFVPKGGPDGGDGGDGGNVYFLVDKNTHTLSHFKGKKVLKAQNGRPGEGRRKHGKKGEDLILIVPPGTQVYDAQSGELIFDLVEDGQKVLFLQGGKGGKGNWHFKSASNQRPTYAQPGLPGKVVQIRLELKLIADVGLVGFPNVGKSTLISTISNAKPEVANYEFTTLTPKLGVVRVSEFESFVMADIPGIIGGASEGKGLGLQFLKHIERTKSLLYMIDMSSYRDPLTQYKTLQKELKNFSEELAKRSFAIALTKIDALQEDEAKEKIEKFIEDLHLNRGGDNRYGLEERYPYFIQDIYAYDSSKPFFVVSISAVARINIDALKYALYDLVKKERSEANSD</sequence>
<organism>
    <name type="scientific">Nitratiruptor sp. (strain SB155-2)</name>
    <dbReference type="NCBI Taxonomy" id="387092"/>
    <lineage>
        <taxon>Bacteria</taxon>
        <taxon>Pseudomonadati</taxon>
        <taxon>Campylobacterota</taxon>
        <taxon>Epsilonproteobacteria</taxon>
        <taxon>Nautiliales</taxon>
        <taxon>Nitratiruptoraceae</taxon>
        <taxon>Nitratiruptor</taxon>
    </lineage>
</organism>
<evidence type="ECO:0000255" key="1">
    <source>
        <dbReference type="HAMAP-Rule" id="MF_01454"/>
    </source>
</evidence>
<evidence type="ECO:0000255" key="2">
    <source>
        <dbReference type="PROSITE-ProRule" id="PRU01231"/>
    </source>
</evidence>